<proteinExistence type="evidence at protein level"/>
<reference key="1">
    <citation type="journal article" date="1989" name="Am. J. Hum. Genet.">
        <title>The putative testis-determining factor and related genes are expressed as discrete-sized transcripts in adult gonadal and somatic tissues.</title>
        <authorList>
            <person name="Lau Y.-F.C."/>
            <person name="Chan K."/>
        </authorList>
    </citation>
    <scope>NUCLEOTIDE SEQUENCE [MRNA] (ISOFORM 1)</scope>
    <source>
        <tissue>Testis</tissue>
    </source>
</reference>
<reference key="2">
    <citation type="journal article" date="1990" name="Proc. Natl. Acad. Sci. U.S.A.">
        <title>Comparison of human ZFY and ZFX transcripts.</title>
        <authorList>
            <person name="Palmer M.S."/>
            <person name="Berta P."/>
            <person name="Sinclair A.H."/>
            <person name="Pym B."/>
            <person name="Goodfellow P.N."/>
        </authorList>
    </citation>
    <scope>NUCLEOTIDE SEQUENCE [MRNA] (ISOFORM 1)</scope>
</reference>
<reference key="3">
    <citation type="journal article" date="2000" name="Mol. Biol. Evol.">
        <title>Sex chromosomal transposable element accumulation and male-driven substitutional evolution in humans.</title>
        <authorList>
            <person name="Erlandsson R."/>
            <person name="Wilson J.F."/>
            <person name="Paabo S."/>
        </authorList>
    </citation>
    <scope>NUCLEOTIDE SEQUENCE [GENOMIC DNA]</scope>
</reference>
<reference key="4">
    <citation type="journal article" date="2004" name="Nat. Genet.">
        <title>Complete sequencing and characterization of 21,243 full-length human cDNAs.</title>
        <authorList>
            <person name="Ota T."/>
            <person name="Suzuki Y."/>
            <person name="Nishikawa T."/>
            <person name="Otsuki T."/>
            <person name="Sugiyama T."/>
            <person name="Irie R."/>
            <person name="Wakamatsu A."/>
            <person name="Hayashi K."/>
            <person name="Sato H."/>
            <person name="Nagai K."/>
            <person name="Kimura K."/>
            <person name="Makita H."/>
            <person name="Sekine M."/>
            <person name="Obayashi M."/>
            <person name="Nishi T."/>
            <person name="Shibahara T."/>
            <person name="Tanaka T."/>
            <person name="Ishii S."/>
            <person name="Yamamoto J."/>
            <person name="Saito K."/>
            <person name="Kawai Y."/>
            <person name="Isono Y."/>
            <person name="Nakamura Y."/>
            <person name="Nagahari K."/>
            <person name="Murakami K."/>
            <person name="Yasuda T."/>
            <person name="Iwayanagi T."/>
            <person name="Wagatsuma M."/>
            <person name="Shiratori A."/>
            <person name="Sudo H."/>
            <person name="Hosoiri T."/>
            <person name="Kaku Y."/>
            <person name="Kodaira H."/>
            <person name="Kondo H."/>
            <person name="Sugawara M."/>
            <person name="Takahashi M."/>
            <person name="Kanda K."/>
            <person name="Yokoi T."/>
            <person name="Furuya T."/>
            <person name="Kikkawa E."/>
            <person name="Omura Y."/>
            <person name="Abe K."/>
            <person name="Kamihara K."/>
            <person name="Katsuta N."/>
            <person name="Sato K."/>
            <person name="Tanikawa M."/>
            <person name="Yamazaki M."/>
            <person name="Ninomiya K."/>
            <person name="Ishibashi T."/>
            <person name="Yamashita H."/>
            <person name="Murakawa K."/>
            <person name="Fujimori K."/>
            <person name="Tanai H."/>
            <person name="Kimata M."/>
            <person name="Watanabe M."/>
            <person name="Hiraoka S."/>
            <person name="Chiba Y."/>
            <person name="Ishida S."/>
            <person name="Ono Y."/>
            <person name="Takiguchi S."/>
            <person name="Watanabe S."/>
            <person name="Yosida M."/>
            <person name="Hotuta T."/>
            <person name="Kusano J."/>
            <person name="Kanehori K."/>
            <person name="Takahashi-Fujii A."/>
            <person name="Hara H."/>
            <person name="Tanase T.-O."/>
            <person name="Nomura Y."/>
            <person name="Togiya S."/>
            <person name="Komai F."/>
            <person name="Hara R."/>
            <person name="Takeuchi K."/>
            <person name="Arita M."/>
            <person name="Imose N."/>
            <person name="Musashino K."/>
            <person name="Yuuki H."/>
            <person name="Oshima A."/>
            <person name="Sasaki N."/>
            <person name="Aotsuka S."/>
            <person name="Yoshikawa Y."/>
            <person name="Matsunawa H."/>
            <person name="Ichihara T."/>
            <person name="Shiohata N."/>
            <person name="Sano S."/>
            <person name="Moriya S."/>
            <person name="Momiyama H."/>
            <person name="Satoh N."/>
            <person name="Takami S."/>
            <person name="Terashima Y."/>
            <person name="Suzuki O."/>
            <person name="Nakagawa S."/>
            <person name="Senoh A."/>
            <person name="Mizoguchi H."/>
            <person name="Goto Y."/>
            <person name="Shimizu F."/>
            <person name="Wakebe H."/>
            <person name="Hishigaki H."/>
            <person name="Watanabe T."/>
            <person name="Sugiyama A."/>
            <person name="Takemoto M."/>
            <person name="Kawakami B."/>
            <person name="Yamazaki M."/>
            <person name="Watanabe K."/>
            <person name="Kumagai A."/>
            <person name="Itakura S."/>
            <person name="Fukuzumi Y."/>
            <person name="Fujimori Y."/>
            <person name="Komiyama M."/>
            <person name="Tashiro H."/>
            <person name="Tanigami A."/>
            <person name="Fujiwara T."/>
            <person name="Ono T."/>
            <person name="Yamada K."/>
            <person name="Fujii Y."/>
            <person name="Ozaki K."/>
            <person name="Hirao M."/>
            <person name="Ohmori Y."/>
            <person name="Kawabata A."/>
            <person name="Hikiji T."/>
            <person name="Kobatake N."/>
            <person name="Inagaki H."/>
            <person name="Ikema Y."/>
            <person name="Okamoto S."/>
            <person name="Okitani R."/>
            <person name="Kawakami T."/>
            <person name="Noguchi S."/>
            <person name="Itoh T."/>
            <person name="Shigeta K."/>
            <person name="Senba T."/>
            <person name="Matsumura K."/>
            <person name="Nakajima Y."/>
            <person name="Mizuno T."/>
            <person name="Morinaga M."/>
            <person name="Sasaki M."/>
            <person name="Togashi T."/>
            <person name="Oyama M."/>
            <person name="Hata H."/>
            <person name="Watanabe M."/>
            <person name="Komatsu T."/>
            <person name="Mizushima-Sugano J."/>
            <person name="Satoh T."/>
            <person name="Shirai Y."/>
            <person name="Takahashi Y."/>
            <person name="Nakagawa K."/>
            <person name="Okumura K."/>
            <person name="Nagase T."/>
            <person name="Nomura N."/>
            <person name="Kikuchi H."/>
            <person name="Masuho Y."/>
            <person name="Yamashita R."/>
            <person name="Nakai K."/>
            <person name="Yada T."/>
            <person name="Nakamura Y."/>
            <person name="Ohara O."/>
            <person name="Isogai T."/>
            <person name="Sugano S."/>
        </authorList>
    </citation>
    <scope>NUCLEOTIDE SEQUENCE [LARGE SCALE MRNA] (ISOFORM 2)</scope>
    <source>
        <tissue>Spleen</tissue>
    </source>
</reference>
<reference key="5">
    <citation type="journal article" date="2003" name="Nature">
        <title>The male-specific region of the human Y chromosome is a mosaic of discrete sequence classes.</title>
        <authorList>
            <person name="Skaletsky H."/>
            <person name="Kuroda-Kawaguchi T."/>
            <person name="Minx P.J."/>
            <person name="Cordum H.S."/>
            <person name="Hillier L.W."/>
            <person name="Brown L.G."/>
            <person name="Repping S."/>
            <person name="Pyntikova T."/>
            <person name="Ali J."/>
            <person name="Bieri T."/>
            <person name="Chinwalla A."/>
            <person name="Delehaunty A."/>
            <person name="Delehaunty K."/>
            <person name="Du H."/>
            <person name="Fewell G."/>
            <person name="Fulton L."/>
            <person name="Fulton R."/>
            <person name="Graves T.A."/>
            <person name="Hou S.-F."/>
            <person name="Latrielle P."/>
            <person name="Leonard S."/>
            <person name="Mardis E."/>
            <person name="Maupin R."/>
            <person name="McPherson J."/>
            <person name="Miner T."/>
            <person name="Nash W."/>
            <person name="Nguyen C."/>
            <person name="Ozersky P."/>
            <person name="Pepin K."/>
            <person name="Rock S."/>
            <person name="Rohlfing T."/>
            <person name="Scott K."/>
            <person name="Schultz B."/>
            <person name="Strong C."/>
            <person name="Tin-Wollam A."/>
            <person name="Yang S.-P."/>
            <person name="Waterston R.H."/>
            <person name="Wilson R.K."/>
            <person name="Rozen S."/>
            <person name="Page D.C."/>
        </authorList>
    </citation>
    <scope>NUCLEOTIDE SEQUENCE [LARGE SCALE GENOMIC DNA]</scope>
</reference>
<reference key="6">
    <citation type="journal article" date="2004" name="Genome Res.">
        <title>The status, quality, and expansion of the NIH full-length cDNA project: the Mammalian Gene Collection (MGC).</title>
        <authorList>
            <consortium name="The MGC Project Team"/>
        </authorList>
    </citation>
    <scope>NUCLEOTIDE SEQUENCE [LARGE SCALE MRNA] (ISOFORMS 1 AND 3)</scope>
</reference>
<reference key="7">
    <citation type="journal article" date="1987" name="Cell">
        <title>The sex-determining region of the human Y chromosome encodes a finger protein.</title>
        <authorList>
            <person name="Page D.C."/>
            <person name="Mosher R."/>
            <person name="Simpson E.M."/>
            <person name="Fisher E.M.C."/>
            <person name="Mardon G."/>
            <person name="Pollack J."/>
            <person name="McGillivray B."/>
            <person name="de la Chapelle A."/>
            <person name="Brown L.G."/>
        </authorList>
    </citation>
    <scope>NUCLEOTIDE SEQUENCE OF 408-801</scope>
</reference>
<reference key="8">
    <citation type="journal article" date="1991" name="Nucleic Acids Res.">
        <title>Comparison of ZFY and ZFX gene structure and analysis of alternative 3' untranslated regions of ZFY.</title>
        <authorList>
            <person name="North M."/>
            <person name="Sargent C."/>
            <person name="O'Brien J."/>
            <person name="Taylor K."/>
            <person name="Wolfe J."/>
            <person name="Affara N.A."/>
            <person name="Ferguson-Smith M.A."/>
        </authorList>
    </citation>
    <scope>NUCLEOTIDE SEQUENCE OF 423-801</scope>
</reference>
<reference key="9">
    <citation type="journal article" date="1989" name="Nucleic Acids Res.">
        <title>Evidence for distinguishable transcripts of the putative testis determining gene (ZFY) and mapping of homologous cDNA sequences to chromosomes X,Y and 9.</title>
        <authorList>
            <person name="Affara N.A."/>
            <person name="Chambers D."/>
            <person name="O'Brien J."/>
            <person name="Habeebu S.S.M."/>
            <person name="Kalaitsidaki M."/>
            <person name="Bishop C.E."/>
            <person name="Ferguson-Smith M.A."/>
        </authorList>
    </citation>
    <scope>NUCLEOTIDE SEQUENCE [GENOMIC DNA] OF 397-446</scope>
</reference>
<reference key="10">
    <citation type="journal article" date="2010" name="Biochemistry">
        <title>Characterization of the DNA binding activity of the ZFY zinc finger domain.</title>
        <authorList>
            <person name="Grants J."/>
            <person name="Flanagan E."/>
            <person name="Yee A."/>
            <person name="Romaniuk P.J."/>
        </authorList>
    </citation>
    <scope>FUNCTION</scope>
    <scope>DOMAIN DNA-BINDING</scope>
</reference>
<reference key="11">
    <citation type="journal article" date="1991" name="Biochemistry">
        <title>Alternating zinc fingers in the human male associated protein ZFY: 2D NMR structure of an even finger and implications for 'jumping-linker' DNA recognition.</title>
        <authorList>
            <person name="Kochoyan M."/>
            <person name="Havel T.F."/>
            <person name="Nguyen D.Z."/>
            <person name="Dahl C.E."/>
            <person name="Keutmann H.T."/>
            <person name="Weiss M.A."/>
        </authorList>
    </citation>
    <scope>STRUCTURE BY NMR OF ZINC-FINGERS</scope>
</reference>
<reference key="12">
    <citation type="journal article" date="1991" name="Biochemistry">
        <title>Alternating zinc fingers in the human male associated protein ZFY: refinement of the NMR structure of an even finger by selective deuterium labeling and implications for DNA recognition.</title>
        <authorList>
            <person name="Kochoyan M."/>
            <person name="Keutmann H.T."/>
            <person name="Weiss M.A."/>
        </authorList>
    </citation>
    <scope>STRUCTURE BY NMR OF ZINC-FINGERS</scope>
</reference>
<reference key="13">
    <citation type="journal article" date="2004" name="Protein Sci.">
        <title>Solvation and the hidden thermodynamics of a zinc finger probed by nonstandard repair of a protein crevice.</title>
        <authorList>
            <person name="Lachenmann M.J."/>
            <person name="Ladbury J.E."/>
            <person name="Qian X."/>
            <person name="Huang K."/>
            <person name="Singh R."/>
            <person name="Weiss M.A."/>
        </authorList>
    </citation>
    <scope>STRUCTURE BY NMR OF 572-598</scope>
</reference>
<evidence type="ECO:0000250" key="1">
    <source>
        <dbReference type="UniProtKB" id="P17012"/>
    </source>
</evidence>
<evidence type="ECO:0000255" key="2">
    <source>
        <dbReference type="PROSITE-ProRule" id="PRU00042"/>
    </source>
</evidence>
<evidence type="ECO:0000269" key="3">
    <source>
    </source>
</evidence>
<evidence type="ECO:0000303" key="4">
    <source>
    </source>
</evidence>
<evidence type="ECO:0000303" key="5">
    <source>
    </source>
</evidence>
<evidence type="ECO:0000305" key="6"/>
<evidence type="ECO:0007829" key="7">
    <source>
        <dbReference type="PDB" id="1KLR"/>
    </source>
</evidence>
<evidence type="ECO:0007829" key="8">
    <source>
        <dbReference type="PDB" id="1XRZ"/>
    </source>
</evidence>
<organism>
    <name type="scientific">Homo sapiens</name>
    <name type="common">Human</name>
    <dbReference type="NCBI Taxonomy" id="9606"/>
    <lineage>
        <taxon>Eukaryota</taxon>
        <taxon>Metazoa</taxon>
        <taxon>Chordata</taxon>
        <taxon>Craniata</taxon>
        <taxon>Vertebrata</taxon>
        <taxon>Euteleostomi</taxon>
        <taxon>Mammalia</taxon>
        <taxon>Eutheria</taxon>
        <taxon>Euarchontoglires</taxon>
        <taxon>Primates</taxon>
        <taxon>Haplorrhini</taxon>
        <taxon>Catarrhini</taxon>
        <taxon>Hominidae</taxon>
        <taxon>Homo</taxon>
    </lineage>
</organism>
<accession>P08048</accession>
<accession>B4DVF7</accession>
<accession>Q14021</accession>
<accession>Q15558</accession>
<accession>Q1RME9</accession>
<accession>Q24JR0</accession>
<accession>Q96TF3</accession>
<comment type="function">
    <text evidence="3">Probable transcriptional activator. Binds to the consensus sequence 5'-AGGCCY-3'.</text>
</comment>
<comment type="interaction">
    <interactant intactId="EBI-12239601">
        <id>P08048</id>
    </interactant>
    <interactant intactId="EBI-9679045">
        <id>Q9NQL9</id>
        <label>DMRT3</label>
    </interactant>
    <organismsDiffer>false</organismsDiffer>
    <experiments>3</experiments>
</comment>
<comment type="interaction">
    <interactant intactId="EBI-12239601">
        <id>P08048</id>
    </interactant>
    <interactant intactId="EBI-750907">
        <id>Q9H8E8</id>
        <label>KAT14</label>
    </interactant>
    <organismsDiffer>false</organismsDiffer>
    <experiments>3</experiments>
</comment>
<comment type="interaction">
    <interactant intactId="EBI-12239601">
        <id>P08048</id>
    </interactant>
    <interactant intactId="EBI-739909">
        <id>Q969R5</id>
        <label>L3MBTL2</label>
    </interactant>
    <organismsDiffer>false</organismsDiffer>
    <experiments>6</experiments>
</comment>
<comment type="subcellular location">
    <subcellularLocation>
        <location>Nucleus</location>
    </subcellularLocation>
</comment>
<comment type="alternative products">
    <event type="alternative splicing"/>
    <isoform>
        <id>P08048-1</id>
        <name>1</name>
        <sequence type="displayed"/>
    </isoform>
    <isoform>
        <id>P08048-2</id>
        <name>2</name>
        <sequence type="described" ref="VSP_042774 VSP_042775"/>
    </isoform>
    <isoform>
        <id>P08048-3</id>
        <name>3</name>
        <sequence type="described" ref="VSP_042824 VSP_042825 VSP_042826"/>
    </isoform>
</comment>
<comment type="domain">
    <text evidence="3">The binding of ZFY to DNA is mediated by the interaction of the GGCC core base pairs with zinc fingers 12 and 13.</text>
</comment>
<comment type="similarity">
    <text evidence="6">Belongs to the krueppel C2H2-type zinc-finger protein family. ZFX/ZFY subfamily.</text>
</comment>
<comment type="caution">
    <text evidence="6">Was originally thought to be the testis determining factor (TDF).</text>
</comment>
<dbReference type="EMBL" id="L10393">
    <property type="protein sequence ID" value="AAA72344.1"/>
    <property type="molecule type" value="mRNA"/>
</dbReference>
<dbReference type="EMBL" id="M30607">
    <property type="protein sequence ID" value="AAA61310.1"/>
    <property type="molecule type" value="mRNA"/>
</dbReference>
<dbReference type="EMBL" id="AF114156">
    <property type="protein sequence ID" value="AAF21973.1"/>
    <property type="molecule type" value="Genomic_DNA"/>
</dbReference>
<dbReference type="EMBL" id="AK301061">
    <property type="protein sequence ID" value="BAG62669.1"/>
    <property type="molecule type" value="mRNA"/>
</dbReference>
<dbReference type="EMBL" id="AC006157">
    <property type="protein sequence ID" value="AAD15612.1"/>
    <property type="molecule type" value="Genomic_DNA"/>
</dbReference>
<dbReference type="EMBL" id="BC114526">
    <property type="protein sequence ID" value="AAI14527.1"/>
    <property type="molecule type" value="mRNA"/>
</dbReference>
<dbReference type="EMBL" id="BC114960">
    <property type="protein sequence ID" value="AAI14961.1"/>
    <property type="molecule type" value="mRNA"/>
</dbReference>
<dbReference type="EMBL" id="X15470">
    <property type="protein sequence ID" value="CAA33498.1"/>
    <property type="molecule type" value="Genomic_DNA"/>
</dbReference>
<dbReference type="CCDS" id="CCDS14774.1">
    <molecule id="P08048-1"/>
</dbReference>
<dbReference type="CCDS" id="CCDS48200.1">
    <molecule id="P08048-2"/>
</dbReference>
<dbReference type="CCDS" id="CCDS48201.1">
    <molecule id="P08048-3"/>
</dbReference>
<dbReference type="PIR" id="A33630">
    <property type="entry name" value="A33630"/>
</dbReference>
<dbReference type="RefSeq" id="NP_001138747.1">
    <molecule id="P08048-3"/>
    <property type="nucleotide sequence ID" value="NM_001145275.2"/>
</dbReference>
<dbReference type="RefSeq" id="NP_001138748.1">
    <molecule id="P08048-2"/>
    <property type="nucleotide sequence ID" value="NM_001145276.2"/>
</dbReference>
<dbReference type="RefSeq" id="NP_001356631.1">
    <molecule id="P08048-1"/>
    <property type="nucleotide sequence ID" value="NM_001369702.1"/>
</dbReference>
<dbReference type="RefSeq" id="NP_001356637.1">
    <molecule id="P08048-3"/>
    <property type="nucleotide sequence ID" value="NM_001369708.1"/>
</dbReference>
<dbReference type="RefSeq" id="NP_003402.2">
    <molecule id="P08048-1"/>
    <property type="nucleotide sequence ID" value="NM_003411.3"/>
</dbReference>
<dbReference type="RefSeq" id="XP_005262627.1">
    <property type="nucleotide sequence ID" value="XM_005262570.2"/>
</dbReference>
<dbReference type="RefSeq" id="XP_016885564.1">
    <molecule id="P08048-1"/>
    <property type="nucleotide sequence ID" value="XM_017030075.2"/>
</dbReference>
<dbReference type="RefSeq" id="XP_016885566.1">
    <property type="nucleotide sequence ID" value="XM_017030077.1"/>
</dbReference>
<dbReference type="RefSeq" id="XP_047298714.1">
    <molecule id="P08048-1"/>
    <property type="nucleotide sequence ID" value="XM_047442758.1"/>
</dbReference>
<dbReference type="RefSeq" id="XP_054184336.1">
    <molecule id="P08048-1"/>
    <property type="nucleotide sequence ID" value="XM_054328361.1"/>
</dbReference>
<dbReference type="RefSeq" id="XP_054184337.1">
    <molecule id="P08048-1"/>
    <property type="nucleotide sequence ID" value="XM_054328362.1"/>
</dbReference>
<dbReference type="PDB" id="1KLR">
    <property type="method" value="NMR"/>
    <property type="chains" value="A=570-598"/>
</dbReference>
<dbReference type="PDB" id="1KLS">
    <property type="method" value="NMR"/>
    <property type="chains" value="A=570-598"/>
</dbReference>
<dbReference type="PDB" id="1XRZ">
    <property type="method" value="NMR"/>
    <property type="chains" value="A=570-598"/>
</dbReference>
<dbReference type="PDB" id="5ZNF">
    <property type="method" value="NMR"/>
    <property type="chains" value="A=570-598"/>
</dbReference>
<dbReference type="PDB" id="7ZNF">
    <property type="method" value="NMR"/>
    <property type="chains" value="A=570-598"/>
</dbReference>
<dbReference type="PDBsum" id="1KLR"/>
<dbReference type="PDBsum" id="1KLS"/>
<dbReference type="PDBsum" id="1XRZ"/>
<dbReference type="PDBsum" id="5ZNF"/>
<dbReference type="PDBsum" id="7ZNF"/>
<dbReference type="SMR" id="P08048"/>
<dbReference type="BioGRID" id="113376">
    <property type="interactions" value="15"/>
</dbReference>
<dbReference type="FunCoup" id="P08048">
    <property type="interactions" value="1407"/>
</dbReference>
<dbReference type="IntAct" id="P08048">
    <property type="interactions" value="8"/>
</dbReference>
<dbReference type="STRING" id="9606.ENSP00000155093"/>
<dbReference type="DrugBank" id="DB02884">
    <property type="generic name" value="3-Cyclohexyl-L-alanine"/>
</dbReference>
<dbReference type="DrugBank" id="DB05483">
    <property type="generic name" value="Picolinic acid"/>
</dbReference>
<dbReference type="GlyGen" id="P08048">
    <property type="glycosylation" value="3 sites, 1 N-linked glycan (1 site), 1 O-linked glycan (2 sites)"/>
</dbReference>
<dbReference type="iPTMnet" id="P08048"/>
<dbReference type="PhosphoSitePlus" id="P08048"/>
<dbReference type="BioMuta" id="ZFY"/>
<dbReference type="DMDM" id="51338719"/>
<dbReference type="jPOST" id="P08048"/>
<dbReference type="MassIVE" id="P08048"/>
<dbReference type="PeptideAtlas" id="P08048"/>
<dbReference type="ProteomicsDB" id="52062">
    <molecule id="P08048-1"/>
</dbReference>
<dbReference type="ProteomicsDB" id="52063">
    <molecule id="P08048-2"/>
</dbReference>
<dbReference type="ProteomicsDB" id="52064">
    <molecule id="P08048-3"/>
</dbReference>
<dbReference type="Pumba" id="P08048"/>
<dbReference type="Antibodypedia" id="21843">
    <property type="antibodies" value="103 antibodies from 16 providers"/>
</dbReference>
<dbReference type="DNASU" id="7544"/>
<dbReference type="Ensembl" id="ENST00000155093.8">
    <molecule id="P08048-1"/>
    <property type="protein sequence ID" value="ENSP00000155093.3"/>
    <property type="gene ID" value="ENSG00000067646.12"/>
</dbReference>
<dbReference type="Ensembl" id="ENST00000383052.5">
    <molecule id="P08048-1"/>
    <property type="protein sequence ID" value="ENSP00000372525.1"/>
    <property type="gene ID" value="ENSG00000067646.12"/>
</dbReference>
<dbReference type="Ensembl" id="ENST00000449237.4">
    <molecule id="P08048-3"/>
    <property type="protein sequence ID" value="ENSP00000393908.1"/>
    <property type="gene ID" value="ENSG00000067646.12"/>
</dbReference>
<dbReference type="Ensembl" id="ENST00000625061.3">
    <molecule id="P08048-2"/>
    <property type="protein sequence ID" value="ENSP00000485605.1"/>
    <property type="gene ID" value="ENSG00000067646.12"/>
</dbReference>
<dbReference type="GeneID" id="7544"/>
<dbReference type="KEGG" id="hsa:7544"/>
<dbReference type="MANE-Select" id="ENST00000155093.8">
    <property type="protein sequence ID" value="ENSP00000155093.3"/>
    <property type="RefSeq nucleotide sequence ID" value="NM_003411.4"/>
    <property type="RefSeq protein sequence ID" value="NP_003402.2"/>
</dbReference>
<dbReference type="UCSC" id="uc004fqj.4">
    <molecule id="P08048-1"/>
    <property type="organism name" value="human"/>
</dbReference>
<dbReference type="AGR" id="HGNC:12870"/>
<dbReference type="CTD" id="7544"/>
<dbReference type="DisGeNET" id="7544"/>
<dbReference type="GeneCards" id="ZFY"/>
<dbReference type="HGNC" id="HGNC:12870">
    <property type="gene designation" value="ZFY"/>
</dbReference>
<dbReference type="HPA" id="ENSG00000067646">
    <property type="expression patterns" value="Low tissue specificity"/>
</dbReference>
<dbReference type="MIM" id="490000">
    <property type="type" value="gene"/>
</dbReference>
<dbReference type="neXtProt" id="NX_P08048"/>
<dbReference type="OpenTargets" id="ENSG00000067646"/>
<dbReference type="PharmGKB" id="PA37459"/>
<dbReference type="VEuPathDB" id="HostDB:ENSG00000067646"/>
<dbReference type="GeneTree" id="ENSGT00940000158684"/>
<dbReference type="InParanoid" id="P08048"/>
<dbReference type="PAN-GO" id="P08048">
    <property type="GO annotations" value="4 GO annotations based on evolutionary models"/>
</dbReference>
<dbReference type="PhylomeDB" id="P08048"/>
<dbReference type="TreeFam" id="TF335557"/>
<dbReference type="PathwayCommons" id="P08048"/>
<dbReference type="SignaLink" id="P08048"/>
<dbReference type="SIGNOR" id="P08048"/>
<dbReference type="BioGRID-ORCS" id="7544">
    <property type="hits" value="9 hits in 790 CRISPR screens"/>
</dbReference>
<dbReference type="ChiTaRS" id="ZFY">
    <property type="organism name" value="human"/>
</dbReference>
<dbReference type="EvolutionaryTrace" id="P08048"/>
<dbReference type="GeneWiki" id="ZFY"/>
<dbReference type="GenomeRNAi" id="7544"/>
<dbReference type="Pharos" id="P08048">
    <property type="development level" value="Tdark"/>
</dbReference>
<dbReference type="PRO" id="PR:P08048"/>
<dbReference type="Proteomes" id="UP000005640">
    <property type="component" value="Chromosome Y"/>
</dbReference>
<dbReference type="RNAct" id="P08048">
    <property type="molecule type" value="protein"/>
</dbReference>
<dbReference type="Bgee" id="ENSG00000067646">
    <property type="expression patterns" value="Expressed in sperm and 160 other cell types or tissues"/>
</dbReference>
<dbReference type="ExpressionAtlas" id="P08048">
    <property type="expression patterns" value="baseline and differential"/>
</dbReference>
<dbReference type="GO" id="GO:0000785">
    <property type="term" value="C:chromatin"/>
    <property type="evidence" value="ECO:0000250"/>
    <property type="project" value="ARUK-UCL"/>
</dbReference>
<dbReference type="GO" id="GO:0005730">
    <property type="term" value="C:nucleolus"/>
    <property type="evidence" value="ECO:0000314"/>
    <property type="project" value="HPA"/>
</dbReference>
<dbReference type="GO" id="GO:0005654">
    <property type="term" value="C:nucleoplasm"/>
    <property type="evidence" value="ECO:0000314"/>
    <property type="project" value="HPA"/>
</dbReference>
<dbReference type="GO" id="GO:0005634">
    <property type="term" value="C:nucleus"/>
    <property type="evidence" value="ECO:0000318"/>
    <property type="project" value="GO_Central"/>
</dbReference>
<dbReference type="GO" id="GO:0001228">
    <property type="term" value="F:DNA-binding transcription activator activity, RNA polymerase II-specific"/>
    <property type="evidence" value="ECO:0000250"/>
    <property type="project" value="ARUK-UCL"/>
</dbReference>
<dbReference type="GO" id="GO:0000981">
    <property type="term" value="F:DNA-binding transcription factor activity, RNA polymerase II-specific"/>
    <property type="evidence" value="ECO:0000318"/>
    <property type="project" value="GO_Central"/>
</dbReference>
<dbReference type="GO" id="GO:0000978">
    <property type="term" value="F:RNA polymerase II cis-regulatory region sequence-specific DNA binding"/>
    <property type="evidence" value="ECO:0000250"/>
    <property type="project" value="ARUK-UCL"/>
</dbReference>
<dbReference type="GO" id="GO:0043565">
    <property type="term" value="F:sequence-specific DNA binding"/>
    <property type="evidence" value="ECO:0000318"/>
    <property type="project" value="GO_Central"/>
</dbReference>
<dbReference type="GO" id="GO:0008270">
    <property type="term" value="F:zinc ion binding"/>
    <property type="evidence" value="ECO:0007669"/>
    <property type="project" value="UniProtKB-KW"/>
</dbReference>
<dbReference type="GO" id="GO:0009566">
    <property type="term" value="P:fertilization"/>
    <property type="evidence" value="ECO:0007669"/>
    <property type="project" value="Ensembl"/>
</dbReference>
<dbReference type="GO" id="GO:0048872">
    <property type="term" value="P:homeostasis of number of cells"/>
    <property type="evidence" value="ECO:0007669"/>
    <property type="project" value="Ensembl"/>
</dbReference>
<dbReference type="GO" id="GO:0035264">
    <property type="term" value="P:multicellular organism growth"/>
    <property type="evidence" value="ECO:0007669"/>
    <property type="project" value="Ensembl"/>
</dbReference>
<dbReference type="GO" id="GO:0048599">
    <property type="term" value="P:oocyte development"/>
    <property type="evidence" value="ECO:0007669"/>
    <property type="project" value="Ensembl"/>
</dbReference>
<dbReference type="GO" id="GO:0001541">
    <property type="term" value="P:ovarian follicle development"/>
    <property type="evidence" value="ECO:0007669"/>
    <property type="project" value="Ensembl"/>
</dbReference>
<dbReference type="GO" id="GO:0060746">
    <property type="term" value="P:parental behavior"/>
    <property type="evidence" value="ECO:0007669"/>
    <property type="project" value="Ensembl"/>
</dbReference>
<dbReference type="GO" id="GO:0045944">
    <property type="term" value="P:positive regulation of transcription by RNA polymerase II"/>
    <property type="evidence" value="ECO:0000250"/>
    <property type="project" value="ARUK-UCL"/>
</dbReference>
<dbReference type="GO" id="GO:0009791">
    <property type="term" value="P:post-embryonic development"/>
    <property type="evidence" value="ECO:0007669"/>
    <property type="project" value="Ensembl"/>
</dbReference>
<dbReference type="GO" id="GO:0006357">
    <property type="term" value="P:regulation of transcription by RNA polymerase II"/>
    <property type="evidence" value="ECO:0000318"/>
    <property type="project" value="GO_Central"/>
</dbReference>
<dbReference type="GO" id="GO:0007283">
    <property type="term" value="P:spermatogenesis"/>
    <property type="evidence" value="ECO:0007669"/>
    <property type="project" value="Ensembl"/>
</dbReference>
<dbReference type="FunFam" id="3.30.160.60:FF:000054">
    <property type="entry name" value="Zinc finger protein 711"/>
    <property type="match status" value="1"/>
</dbReference>
<dbReference type="FunFam" id="3.30.160.60:FF:000209">
    <property type="entry name" value="Zinc finger protein 711"/>
    <property type="match status" value="3"/>
</dbReference>
<dbReference type="FunFam" id="3.30.160.60:FF:000170">
    <property type="entry name" value="Zinc finger protein 711 isoform X2"/>
    <property type="match status" value="1"/>
</dbReference>
<dbReference type="FunFam" id="3.30.160.60:FF:000607">
    <property type="entry name" value="zinc finger X-chromosomal protein-like isoform X1"/>
    <property type="match status" value="1"/>
</dbReference>
<dbReference type="FunFam" id="3.30.160.60:FF:000461">
    <property type="entry name" value="Zinc finger X-chromosomal protein-like protein"/>
    <property type="match status" value="1"/>
</dbReference>
<dbReference type="Gene3D" id="3.30.160.60">
    <property type="entry name" value="Classic Zinc Finger"/>
    <property type="match status" value="8"/>
</dbReference>
<dbReference type="InterPro" id="IPR006794">
    <property type="entry name" value="Transcrp_activ_Zfx/Zfy-dom"/>
</dbReference>
<dbReference type="InterPro" id="IPR036236">
    <property type="entry name" value="Znf_C2H2_sf"/>
</dbReference>
<dbReference type="InterPro" id="IPR013087">
    <property type="entry name" value="Znf_C2H2_type"/>
</dbReference>
<dbReference type="PANTHER" id="PTHR24381:SF393">
    <property type="entry name" value="CHROMATIN-LINKED ADAPTOR FOR MSL PROTEINS, ISOFORM B"/>
    <property type="match status" value="1"/>
</dbReference>
<dbReference type="PANTHER" id="PTHR24381">
    <property type="entry name" value="ZINC FINGER PROTEIN"/>
    <property type="match status" value="1"/>
</dbReference>
<dbReference type="Pfam" id="PF00096">
    <property type="entry name" value="zf-C2H2"/>
    <property type="match status" value="7"/>
</dbReference>
<dbReference type="Pfam" id="PF13909">
    <property type="entry name" value="zf-H2C2_5"/>
    <property type="match status" value="1"/>
</dbReference>
<dbReference type="Pfam" id="PF04704">
    <property type="entry name" value="Zfx_Zfy_act"/>
    <property type="match status" value="1"/>
</dbReference>
<dbReference type="SMART" id="SM00355">
    <property type="entry name" value="ZnF_C2H2"/>
    <property type="match status" value="13"/>
</dbReference>
<dbReference type="SUPFAM" id="SSF57667">
    <property type="entry name" value="beta-beta-alpha zinc fingers"/>
    <property type="match status" value="7"/>
</dbReference>
<dbReference type="PROSITE" id="PS00028">
    <property type="entry name" value="ZINC_FINGER_C2H2_1"/>
    <property type="match status" value="8"/>
</dbReference>
<dbReference type="PROSITE" id="PS50157">
    <property type="entry name" value="ZINC_FINGER_C2H2_2"/>
    <property type="match status" value="12"/>
</dbReference>
<keyword id="KW-0002">3D-structure</keyword>
<keyword id="KW-0010">Activator</keyword>
<keyword id="KW-0025">Alternative splicing</keyword>
<keyword id="KW-0238">DNA-binding</keyword>
<keyword id="KW-0479">Metal-binding</keyword>
<keyword id="KW-0539">Nucleus</keyword>
<keyword id="KW-0597">Phosphoprotein</keyword>
<keyword id="KW-1267">Proteomics identification</keyword>
<keyword id="KW-1185">Reference proteome</keyword>
<keyword id="KW-0677">Repeat</keyword>
<keyword id="KW-0804">Transcription</keyword>
<keyword id="KW-0805">Transcription regulation</keyword>
<keyword id="KW-0862">Zinc</keyword>
<keyword id="KW-0863">Zinc-finger</keyword>
<feature type="chain" id="PRO_0000047261" description="Zinc finger Y-chromosomal protein">
    <location>
        <begin position="1"/>
        <end position="801"/>
    </location>
</feature>
<feature type="zinc finger region" description="C2H2-type 1" evidence="2">
    <location>
        <begin position="421"/>
        <end position="443"/>
    </location>
</feature>
<feature type="zinc finger region" description="C2H2-type 2; atypical" evidence="2">
    <location>
        <begin position="452"/>
        <end position="474"/>
    </location>
</feature>
<feature type="zinc finger region" description="C2H2-type 3" evidence="2">
    <location>
        <begin position="484"/>
        <end position="506"/>
    </location>
</feature>
<feature type="zinc finger region" description="C2H2-type 4" evidence="2">
    <location>
        <begin position="515"/>
        <end position="538"/>
    </location>
</feature>
<feature type="zinc finger region" description="C2H2-type 5" evidence="2">
    <location>
        <begin position="544"/>
        <end position="566"/>
    </location>
</feature>
<feature type="zinc finger region" description="C2H2-type 6" evidence="2">
    <location>
        <begin position="572"/>
        <end position="595"/>
    </location>
</feature>
<feature type="zinc finger region" description="C2H2-type 7" evidence="2">
    <location>
        <begin position="601"/>
        <end position="623"/>
    </location>
</feature>
<feature type="zinc finger region" description="C2H2-type 8" evidence="2">
    <location>
        <begin position="629"/>
        <end position="652"/>
    </location>
</feature>
<feature type="zinc finger region" description="C2H2-type 9" evidence="2">
    <location>
        <begin position="658"/>
        <end position="680"/>
    </location>
</feature>
<feature type="zinc finger region" description="C2H2-type 10" evidence="2">
    <location>
        <begin position="686"/>
        <end position="709"/>
    </location>
</feature>
<feature type="zinc finger region" description="C2H2-type 11" evidence="2">
    <location>
        <begin position="715"/>
        <end position="737"/>
    </location>
</feature>
<feature type="zinc finger region" description="C2H2-type 12" evidence="2">
    <location>
        <begin position="743"/>
        <end position="766"/>
    </location>
</feature>
<feature type="zinc finger region" description="C2H2-type 13" evidence="2">
    <location>
        <begin position="772"/>
        <end position="795"/>
    </location>
</feature>
<feature type="modified residue" description="Phosphoserine" evidence="1">
    <location>
        <position position="270"/>
    </location>
</feature>
<feature type="splice variant" id="VSP_042824" description="In isoform 3." evidence="5">
    <location>
        <begin position="1"/>
        <end position="26"/>
    </location>
</feature>
<feature type="splice variant" id="VSP_042774" description="In isoform 2." evidence="4">
    <original>G</original>
    <variation>V</variation>
    <location>
        <position position="21"/>
    </location>
</feature>
<feature type="splice variant" id="VSP_042775" description="In isoform 2." evidence="4">
    <location>
        <begin position="22"/>
        <end position="212"/>
    </location>
</feature>
<feature type="splice variant" id="VSP_042825" description="In isoform 3." evidence="5">
    <original>N</original>
    <variation>S</variation>
    <location>
        <position position="310"/>
    </location>
</feature>
<feature type="splice variant" id="VSP_042826" description="In isoform 3." evidence="5">
    <location>
        <begin position="311"/>
        <end position="361"/>
    </location>
</feature>
<feature type="sequence conflict" description="In Ref. 1; AAA72344." evidence="6" ref="1">
    <original>A</original>
    <variation>R</variation>
    <location>
        <position position="333"/>
    </location>
</feature>
<feature type="sequence conflict" description="In Ref. 9." evidence="6" ref="9">
    <original>RRPDSRQYQT</original>
    <variation>ALILLSFPFL</variation>
    <location>
        <begin position="398"/>
        <end position="407"/>
    </location>
</feature>
<feature type="sequence conflict" description="In Ref. 8." evidence="6" ref="8">
    <original>R</original>
    <variation>S</variation>
    <location>
        <position position="554"/>
    </location>
</feature>
<feature type="sequence conflict" description="In Ref. 2; AAA61310." evidence="6" ref="2">
    <original>H</original>
    <variation>Y</variation>
    <location>
        <position position="555"/>
    </location>
</feature>
<feature type="sequence conflict" description="In Ref. 8." evidence="6" ref="8">
    <location>
        <position position="630"/>
    </location>
</feature>
<feature type="sequence conflict" description="In Ref. 8." evidence="6" ref="8">
    <original>T</original>
    <variation>R</variation>
    <location>
        <position position="767"/>
    </location>
</feature>
<feature type="strand" evidence="7">
    <location>
        <begin position="575"/>
        <end position="578"/>
    </location>
</feature>
<feature type="strand" evidence="8">
    <location>
        <begin position="580"/>
        <end position="583"/>
    </location>
</feature>
<feature type="helix" evidence="7">
    <location>
        <begin position="585"/>
        <end position="594"/>
    </location>
</feature>
<gene>
    <name type="primary">ZFY</name>
</gene>
<name>ZFY_HUMAN</name>
<sequence>MDEDEFELQPQEPNSFFDGIGADATHMDGDQIVVEIQEAVFVSNIVDSDITVHNFVPDDPDSVVIQDVVEDVVIEEDVQCSDILEEADVSENVIIPEQVLDSDVTEEVSLPHCTVPDDVLASDITSTSMSMPEHVLTSESMHVCDIGHVEHMVHDSVVEAEIITDPLTSDIVSEEVLVADCAPEAVIDASGISVDQQDNDKASCEDYLMISLDDAGKIEHDGSTGVTIDAESEMDPCKVDSTCPEVIKVYIFKADPGEDDLGGTVDIVESEPENDHGVELLDQNSSIRVPREKMVYMTVNDSQQEDEDLNVAEIADEVYMEVIVGEEDAAVAAAAAAVHEQQIDEDEMKTFVPIAWAAAYGNNSDGIENRNGTASALLHIDESAGLGRLAKQKPKKKRRPDSRQYQTAIIIGPDGHPLTVYPCMICGKKFKSRGFLKRHMKNHPEHLAKKKYHCTDCDYTTNKKISLHNHLESHKLTSKAEKAIECDECGKHFSHAGALFTHKMVHKEKGANKMHKCKFCEYETAEQGLLNRHLLAVHSKNFPHICVECGKGFRHPSELRKHMRIHTGEKPYQCQYCEYRSADSSNLKTHIKTKHSKEMPFKCDICLLTFSDTKEVQQHTLVHQESKTHQCLHCDHKSSNSSDLKRHVISVHTKDYPHKCEMCEKGFHRPSELKKHVAVHKGKKMHQCRHCDFKIADPFVLSRHILSVHTKDLPFRCKRCRKGFRQQNELKKHMKTHSGRKVYQCEYCEYSTTDASGFKRHVISIHTKDYPHRCEYCKKGFRRPSEKNQHIMRHHKEVGLP</sequence>
<protein>
    <recommendedName>
        <fullName>Zinc finger Y-chromosomal protein</fullName>
    </recommendedName>
</protein>